<proteinExistence type="inferred from homology"/>
<name>TAL_SYNY3</name>
<keyword id="KW-0106">Calcium</keyword>
<keyword id="KW-0963">Cytoplasm</keyword>
<keyword id="KW-0479">Metal-binding</keyword>
<keyword id="KW-0570">Pentose shunt</keyword>
<keyword id="KW-1185">Reference proteome</keyword>
<keyword id="KW-0677">Repeat</keyword>
<keyword id="KW-0704">Schiff base</keyword>
<keyword id="KW-0808">Transferase</keyword>
<evidence type="ECO:0000255" key="1">
    <source>
        <dbReference type="HAMAP-Rule" id="MF_00492"/>
    </source>
</evidence>
<evidence type="ECO:0000255" key="2">
    <source>
        <dbReference type="PROSITE-ProRule" id="PRU10142"/>
    </source>
</evidence>
<evidence type="ECO:0000305" key="3"/>
<protein>
    <recommendedName>
        <fullName evidence="1">Transaldolase</fullName>
        <ecNumber evidence="1">2.2.1.2</ecNumber>
    </recommendedName>
</protein>
<reference key="1">
    <citation type="journal article" date="1996" name="Plant Mol. Biol.">
        <title>Transaldolase genes from the cyanobacteria Anabaena variabilis and Synechocystis sp. PCC 6803: comparison with other eubacterial and eukaryotic homologues.</title>
        <authorList>
            <person name="Koehler U."/>
            <person name="Cerff R."/>
            <person name="Brinkmann H."/>
        </authorList>
    </citation>
    <scope>NUCLEOTIDE SEQUENCE [GENOMIC DNA]</scope>
</reference>
<reference key="2">
    <citation type="journal article" date="1996" name="DNA Res.">
        <title>Sequence analysis of the genome of the unicellular cyanobacterium Synechocystis sp. strain PCC6803. II. Sequence determination of the entire genome and assignment of potential protein-coding regions.</title>
        <authorList>
            <person name="Kaneko T."/>
            <person name="Sato S."/>
            <person name="Kotani H."/>
            <person name="Tanaka A."/>
            <person name="Asamizu E."/>
            <person name="Nakamura Y."/>
            <person name="Miyajima N."/>
            <person name="Hirosawa M."/>
            <person name="Sugiura M."/>
            <person name="Sasamoto S."/>
            <person name="Kimura T."/>
            <person name="Hosouchi T."/>
            <person name="Matsuno A."/>
            <person name="Muraki A."/>
            <person name="Nakazaki N."/>
            <person name="Naruo K."/>
            <person name="Okumura S."/>
            <person name="Shimpo S."/>
            <person name="Takeuchi C."/>
            <person name="Wada T."/>
            <person name="Watanabe A."/>
            <person name="Yamada M."/>
            <person name="Yasuda M."/>
            <person name="Tabata S."/>
        </authorList>
    </citation>
    <scope>NUCLEOTIDE SEQUENCE [LARGE SCALE GENOMIC DNA]</scope>
    <source>
        <strain>ATCC 27184 / PCC 6803 / Kazusa</strain>
    </source>
</reference>
<gene>
    <name evidence="1" type="primary">tal</name>
    <name type="synonym">talB</name>
    <name type="ordered locus">slr1793</name>
</gene>
<comment type="function">
    <text evidence="1">Transaldolase is important for the balance of metabolites in the pentose-phosphate pathway.</text>
</comment>
<comment type="catalytic activity">
    <reaction evidence="1">
        <text>D-sedoheptulose 7-phosphate + D-glyceraldehyde 3-phosphate = D-erythrose 4-phosphate + beta-D-fructose 6-phosphate</text>
        <dbReference type="Rhea" id="RHEA:17053"/>
        <dbReference type="ChEBI" id="CHEBI:16897"/>
        <dbReference type="ChEBI" id="CHEBI:57483"/>
        <dbReference type="ChEBI" id="CHEBI:57634"/>
        <dbReference type="ChEBI" id="CHEBI:59776"/>
        <dbReference type="EC" id="2.2.1.2"/>
    </reaction>
</comment>
<comment type="pathway">
    <text evidence="1">Carbohydrate degradation; pentose phosphate pathway; D-glyceraldehyde 3-phosphate and beta-D-fructose 6-phosphate from D-ribose 5-phosphate and D-xylulose 5-phosphate (non-oxidative stage): step 2/3.</text>
</comment>
<comment type="subcellular location">
    <subcellularLocation>
        <location evidence="1">Cytoplasm</location>
    </subcellularLocation>
</comment>
<comment type="similarity">
    <text evidence="1 3">Belongs to the transaldolase family. Type 1 subfamily.</text>
</comment>
<dbReference type="EC" id="2.2.1.2" evidence="1"/>
<dbReference type="EMBL" id="L47328">
    <property type="protein sequence ID" value="AAT01096.1"/>
    <property type="molecule type" value="Genomic_DNA"/>
</dbReference>
<dbReference type="EMBL" id="BA000022">
    <property type="protein sequence ID" value="BAA16812.1"/>
    <property type="molecule type" value="Genomic_DNA"/>
</dbReference>
<dbReference type="PIR" id="S74660">
    <property type="entry name" value="S74660"/>
</dbReference>
<dbReference type="SMR" id="P72797"/>
<dbReference type="IntAct" id="P72797">
    <property type="interactions" value="4"/>
</dbReference>
<dbReference type="STRING" id="1148.gene:10497669"/>
<dbReference type="PaxDb" id="1148-1651885"/>
<dbReference type="EnsemblBacteria" id="BAA16812">
    <property type="protein sequence ID" value="BAA16812"/>
    <property type="gene ID" value="BAA16812"/>
</dbReference>
<dbReference type="KEGG" id="syn:slr1793"/>
<dbReference type="eggNOG" id="COG0176">
    <property type="taxonomic scope" value="Bacteria"/>
</dbReference>
<dbReference type="InParanoid" id="P72797"/>
<dbReference type="PhylomeDB" id="P72797"/>
<dbReference type="UniPathway" id="UPA00115">
    <property type="reaction ID" value="UER00414"/>
</dbReference>
<dbReference type="Proteomes" id="UP000001425">
    <property type="component" value="Chromosome"/>
</dbReference>
<dbReference type="GO" id="GO:0005737">
    <property type="term" value="C:cytoplasm"/>
    <property type="evidence" value="ECO:0007669"/>
    <property type="project" value="UniProtKB-SubCell"/>
</dbReference>
<dbReference type="GO" id="GO:0005509">
    <property type="term" value="F:calcium ion binding"/>
    <property type="evidence" value="ECO:0007669"/>
    <property type="project" value="InterPro"/>
</dbReference>
<dbReference type="GO" id="GO:0004801">
    <property type="term" value="F:transaldolase activity"/>
    <property type="evidence" value="ECO:0000250"/>
    <property type="project" value="UniProtKB"/>
</dbReference>
<dbReference type="GO" id="GO:0005975">
    <property type="term" value="P:carbohydrate metabolic process"/>
    <property type="evidence" value="ECO:0007669"/>
    <property type="project" value="InterPro"/>
</dbReference>
<dbReference type="GO" id="GO:0006098">
    <property type="term" value="P:pentose-phosphate shunt"/>
    <property type="evidence" value="ECO:0007669"/>
    <property type="project" value="UniProtKB-UniRule"/>
</dbReference>
<dbReference type="CDD" id="cd00051">
    <property type="entry name" value="EFh"/>
    <property type="match status" value="1"/>
</dbReference>
<dbReference type="CDD" id="cd00957">
    <property type="entry name" value="Transaldolase_TalAB"/>
    <property type="match status" value="1"/>
</dbReference>
<dbReference type="FunFam" id="3.20.20.70:FF:000002">
    <property type="entry name" value="Transaldolase"/>
    <property type="match status" value="1"/>
</dbReference>
<dbReference type="Gene3D" id="3.20.20.70">
    <property type="entry name" value="Aldolase class I"/>
    <property type="match status" value="1"/>
</dbReference>
<dbReference type="Gene3D" id="1.10.238.10">
    <property type="entry name" value="EF-hand"/>
    <property type="match status" value="1"/>
</dbReference>
<dbReference type="HAMAP" id="MF_00492">
    <property type="entry name" value="Transaldolase_1"/>
    <property type="match status" value="1"/>
</dbReference>
<dbReference type="InterPro" id="IPR013785">
    <property type="entry name" value="Aldolase_TIM"/>
</dbReference>
<dbReference type="InterPro" id="IPR011992">
    <property type="entry name" value="EF-hand-dom_pair"/>
</dbReference>
<dbReference type="InterPro" id="IPR018247">
    <property type="entry name" value="EF_Hand_1_Ca_BS"/>
</dbReference>
<dbReference type="InterPro" id="IPR002048">
    <property type="entry name" value="EF_hand_dom"/>
</dbReference>
<dbReference type="InterPro" id="IPR001585">
    <property type="entry name" value="TAL/FSA"/>
</dbReference>
<dbReference type="InterPro" id="IPR004730">
    <property type="entry name" value="Transaldolase_1"/>
</dbReference>
<dbReference type="InterPro" id="IPR018225">
    <property type="entry name" value="Transaldolase_AS"/>
</dbReference>
<dbReference type="NCBIfam" id="NF008965">
    <property type="entry name" value="PRK12309.1"/>
    <property type="match status" value="1"/>
</dbReference>
<dbReference type="NCBIfam" id="TIGR00874">
    <property type="entry name" value="talAB"/>
    <property type="match status" value="1"/>
</dbReference>
<dbReference type="PANTHER" id="PTHR10683">
    <property type="entry name" value="TRANSALDOLASE"/>
    <property type="match status" value="1"/>
</dbReference>
<dbReference type="PANTHER" id="PTHR10683:SF18">
    <property type="entry name" value="TRANSALDOLASE"/>
    <property type="match status" value="1"/>
</dbReference>
<dbReference type="Pfam" id="PF13202">
    <property type="entry name" value="EF-hand_5"/>
    <property type="match status" value="2"/>
</dbReference>
<dbReference type="Pfam" id="PF00923">
    <property type="entry name" value="TAL_FSA"/>
    <property type="match status" value="1"/>
</dbReference>
<dbReference type="SUPFAM" id="SSF51569">
    <property type="entry name" value="Aldolase"/>
    <property type="match status" value="1"/>
</dbReference>
<dbReference type="SUPFAM" id="SSF47473">
    <property type="entry name" value="EF-hand"/>
    <property type="match status" value="1"/>
</dbReference>
<dbReference type="PROSITE" id="PS00018">
    <property type="entry name" value="EF_HAND_1"/>
    <property type="match status" value="2"/>
</dbReference>
<dbReference type="PROSITE" id="PS50222">
    <property type="entry name" value="EF_HAND_2"/>
    <property type="match status" value="2"/>
</dbReference>
<dbReference type="PROSITE" id="PS01054">
    <property type="entry name" value="TRANSALDOLASE_1"/>
    <property type="match status" value="1"/>
</dbReference>
<dbReference type="PROSITE" id="PS00958">
    <property type="entry name" value="TRANSALDOLASE_2"/>
    <property type="match status" value="1"/>
</dbReference>
<sequence>MGKNLLEQLRQFTVVVADTGDIQAIETFTPRDSTTNPSLITAAAQMPQYQEIVDSTLLKAKDEAGENASIKDIVRLAFDRLAVAFGLKILQIIPGRVSTEVDARLSYDTEATIAKARYLIGEYAKAGIDKKRILIKIASTWEGIKAAEVLEQEGIHCNLTLLFGLHQAIACAEAKVTLISPFVGRILDWYKKSTGKEYDSHEDPGVQSVTTIYNYYKRFGYKTEVMGASFRNIGEIIELAGCDLLTISPQLLDQLRNTEGDLPRKLDPATVPQDIEKIVMDKATFDKMHAEDPMASEKLAEGIAGFTKALEVLEHLLEERLKVLDGQEHIKHGAEEIFHAYDLDGDGFITREEWAGTDVVFDALDRDHDGKITAAEMSAGLGAAFRLASVG</sequence>
<feature type="chain" id="PRO_0000173619" description="Transaldolase">
    <location>
        <begin position="1"/>
        <end position="391"/>
    </location>
</feature>
<feature type="domain" description="EF-hand 1">
    <location>
        <begin position="329"/>
        <end position="364"/>
    </location>
</feature>
<feature type="domain" description="EF-hand 2">
    <location>
        <begin position="365"/>
        <end position="387"/>
    </location>
</feature>
<feature type="region of interest" description="Transaldolase">
    <location>
        <begin position="1"/>
        <end position="329"/>
    </location>
</feature>
<feature type="active site" description="Schiff-base intermediate with substrate" evidence="1">
    <location>
        <position position="136"/>
    </location>
</feature>
<feature type="binding site" evidence="2">
    <location>
        <position position="342"/>
    </location>
    <ligand>
        <name>Ca(2+)</name>
        <dbReference type="ChEBI" id="CHEBI:29108"/>
        <label>1</label>
    </ligand>
</feature>
<feature type="binding site" evidence="2">
    <location>
        <position position="344"/>
    </location>
    <ligand>
        <name>Ca(2+)</name>
        <dbReference type="ChEBI" id="CHEBI:29108"/>
        <label>1</label>
    </ligand>
</feature>
<feature type="binding site" evidence="2">
    <location>
        <position position="346"/>
    </location>
    <ligand>
        <name>Ca(2+)</name>
        <dbReference type="ChEBI" id="CHEBI:29108"/>
        <label>1</label>
    </ligand>
</feature>
<feature type="binding site" evidence="2">
    <location>
        <position position="353"/>
    </location>
    <ligand>
        <name>Ca(2+)</name>
        <dbReference type="ChEBI" id="CHEBI:29108"/>
        <label>1</label>
    </ligand>
</feature>
<feature type="binding site" evidence="2">
    <location>
        <position position="365"/>
    </location>
    <ligand>
        <name>Ca(2+)</name>
        <dbReference type="ChEBI" id="CHEBI:29108"/>
        <label>2</label>
    </ligand>
</feature>
<feature type="binding site" evidence="2">
    <location>
        <position position="367"/>
    </location>
    <ligand>
        <name>Ca(2+)</name>
        <dbReference type="ChEBI" id="CHEBI:29108"/>
        <label>2</label>
    </ligand>
</feature>
<feature type="binding site" evidence="2">
    <location>
        <position position="369"/>
    </location>
    <ligand>
        <name>Ca(2+)</name>
        <dbReference type="ChEBI" id="CHEBI:29108"/>
        <label>2</label>
    </ligand>
</feature>
<feature type="binding site" evidence="2">
    <location>
        <position position="371"/>
    </location>
    <ligand>
        <name>Ca(2+)</name>
        <dbReference type="ChEBI" id="CHEBI:29108"/>
        <label>2</label>
    </ligand>
</feature>
<feature type="binding site" evidence="2">
    <location>
        <position position="376"/>
    </location>
    <ligand>
        <name>Ca(2+)</name>
        <dbReference type="ChEBI" id="CHEBI:29108"/>
        <label>2</label>
    </ligand>
</feature>
<organism>
    <name type="scientific">Synechocystis sp. (strain ATCC 27184 / PCC 6803 / Kazusa)</name>
    <dbReference type="NCBI Taxonomy" id="1111708"/>
    <lineage>
        <taxon>Bacteria</taxon>
        <taxon>Bacillati</taxon>
        <taxon>Cyanobacteriota</taxon>
        <taxon>Cyanophyceae</taxon>
        <taxon>Synechococcales</taxon>
        <taxon>Merismopediaceae</taxon>
        <taxon>Synechocystis</taxon>
    </lineage>
</organism>
<accession>P72797</accession>